<feature type="chain" id="PRO_1000055349" description="Large ribosomal subunit protein uL13">
    <location>
        <begin position="1"/>
        <end position="154"/>
    </location>
</feature>
<keyword id="KW-0687">Ribonucleoprotein</keyword>
<keyword id="KW-0689">Ribosomal protein</keyword>
<evidence type="ECO:0000255" key="1">
    <source>
        <dbReference type="HAMAP-Rule" id="MF_01366"/>
    </source>
</evidence>
<evidence type="ECO:0000305" key="2"/>
<accession>Q661S8</accession>
<gene>
    <name evidence="1" type="primary">rplM</name>
    <name type="ordered locus">BG0340</name>
</gene>
<sequence>MKKITNNVTIWIKPKTVEKKWYLIDAADRVLGKVAVDVVRILRGKHKAYYTPHQDLGDNVIIINASKVRLTGKKHQQKLYYRHSRYPGGLYSDTFKTLSERKPCAPLEIAIKGMLPKGPLGRDLFRNLKVFSGSEHTLKAQNPIKLEANLREVK</sequence>
<protein>
    <recommendedName>
        <fullName evidence="1">Large ribosomal subunit protein uL13</fullName>
    </recommendedName>
    <alternativeName>
        <fullName evidence="2">50S ribosomal protein L13</fullName>
    </alternativeName>
</protein>
<organism>
    <name type="scientific">Borrelia garinii subsp. bavariensis (strain ATCC BAA-2496 / DSM 23469 / PBi)</name>
    <name type="common">Borreliella bavariensis</name>
    <dbReference type="NCBI Taxonomy" id="290434"/>
    <lineage>
        <taxon>Bacteria</taxon>
        <taxon>Pseudomonadati</taxon>
        <taxon>Spirochaetota</taxon>
        <taxon>Spirochaetia</taxon>
        <taxon>Spirochaetales</taxon>
        <taxon>Borreliaceae</taxon>
        <taxon>Borreliella</taxon>
    </lineage>
</organism>
<comment type="function">
    <text evidence="1">This protein is one of the early assembly proteins of the 50S ribosomal subunit, although it is not seen to bind rRNA by itself. It is important during the early stages of 50S assembly.</text>
</comment>
<comment type="subunit">
    <text evidence="1">Part of the 50S ribosomal subunit.</text>
</comment>
<comment type="similarity">
    <text evidence="1">Belongs to the universal ribosomal protein uL13 family.</text>
</comment>
<reference key="1">
    <citation type="journal article" date="2004" name="Nucleic Acids Res.">
        <title>Comparative analysis of the Borrelia garinii genome.</title>
        <authorList>
            <person name="Gloeckner G."/>
            <person name="Lehmann R."/>
            <person name="Romualdi A."/>
            <person name="Pradella S."/>
            <person name="Schulte-Spechtel U."/>
            <person name="Schilhabel M."/>
            <person name="Wilske B."/>
            <person name="Suehnel J."/>
            <person name="Platzer M."/>
        </authorList>
    </citation>
    <scope>NUCLEOTIDE SEQUENCE [LARGE SCALE GENOMIC DNA]</scope>
    <source>
        <strain>ATCC BAA-2496 / DSM 23469 / PBi</strain>
    </source>
</reference>
<name>RL13_BORGP</name>
<proteinExistence type="inferred from homology"/>
<dbReference type="EMBL" id="CP000013">
    <property type="protein sequence ID" value="AAU07193.1"/>
    <property type="molecule type" value="Genomic_DNA"/>
</dbReference>
<dbReference type="RefSeq" id="WP_011193668.1">
    <property type="nucleotide sequence ID" value="NZ_CP028872.1"/>
</dbReference>
<dbReference type="SMR" id="Q661S8"/>
<dbReference type="GeneID" id="45161128"/>
<dbReference type="KEGG" id="bga:BG0340"/>
<dbReference type="eggNOG" id="COG0102">
    <property type="taxonomic scope" value="Bacteria"/>
</dbReference>
<dbReference type="HOGENOM" id="CLU_082184_2_2_12"/>
<dbReference type="OrthoDB" id="9801330at2"/>
<dbReference type="Proteomes" id="UP000002276">
    <property type="component" value="Chromosome"/>
</dbReference>
<dbReference type="GO" id="GO:0022625">
    <property type="term" value="C:cytosolic large ribosomal subunit"/>
    <property type="evidence" value="ECO:0007669"/>
    <property type="project" value="TreeGrafter"/>
</dbReference>
<dbReference type="GO" id="GO:0003729">
    <property type="term" value="F:mRNA binding"/>
    <property type="evidence" value="ECO:0007669"/>
    <property type="project" value="TreeGrafter"/>
</dbReference>
<dbReference type="GO" id="GO:0003735">
    <property type="term" value="F:structural constituent of ribosome"/>
    <property type="evidence" value="ECO:0007669"/>
    <property type="project" value="InterPro"/>
</dbReference>
<dbReference type="GO" id="GO:0017148">
    <property type="term" value="P:negative regulation of translation"/>
    <property type="evidence" value="ECO:0007669"/>
    <property type="project" value="TreeGrafter"/>
</dbReference>
<dbReference type="GO" id="GO:0006412">
    <property type="term" value="P:translation"/>
    <property type="evidence" value="ECO:0007669"/>
    <property type="project" value="UniProtKB-UniRule"/>
</dbReference>
<dbReference type="CDD" id="cd00392">
    <property type="entry name" value="Ribosomal_L13"/>
    <property type="match status" value="1"/>
</dbReference>
<dbReference type="Gene3D" id="3.90.1180.10">
    <property type="entry name" value="Ribosomal protein L13"/>
    <property type="match status" value="1"/>
</dbReference>
<dbReference type="HAMAP" id="MF_01366">
    <property type="entry name" value="Ribosomal_uL13"/>
    <property type="match status" value="1"/>
</dbReference>
<dbReference type="InterPro" id="IPR005822">
    <property type="entry name" value="Ribosomal_uL13"/>
</dbReference>
<dbReference type="InterPro" id="IPR005823">
    <property type="entry name" value="Ribosomal_uL13_bac-type"/>
</dbReference>
<dbReference type="InterPro" id="IPR023563">
    <property type="entry name" value="Ribosomal_uL13_CS"/>
</dbReference>
<dbReference type="InterPro" id="IPR036899">
    <property type="entry name" value="Ribosomal_uL13_sf"/>
</dbReference>
<dbReference type="NCBIfam" id="TIGR01066">
    <property type="entry name" value="rplM_bact"/>
    <property type="match status" value="1"/>
</dbReference>
<dbReference type="PANTHER" id="PTHR11545:SF2">
    <property type="entry name" value="LARGE RIBOSOMAL SUBUNIT PROTEIN UL13M"/>
    <property type="match status" value="1"/>
</dbReference>
<dbReference type="PANTHER" id="PTHR11545">
    <property type="entry name" value="RIBOSOMAL PROTEIN L13"/>
    <property type="match status" value="1"/>
</dbReference>
<dbReference type="Pfam" id="PF00572">
    <property type="entry name" value="Ribosomal_L13"/>
    <property type="match status" value="1"/>
</dbReference>
<dbReference type="PIRSF" id="PIRSF002181">
    <property type="entry name" value="Ribosomal_L13"/>
    <property type="match status" value="1"/>
</dbReference>
<dbReference type="SUPFAM" id="SSF52161">
    <property type="entry name" value="Ribosomal protein L13"/>
    <property type="match status" value="1"/>
</dbReference>
<dbReference type="PROSITE" id="PS00783">
    <property type="entry name" value="RIBOSOMAL_L13"/>
    <property type="match status" value="1"/>
</dbReference>